<dbReference type="EMBL" id="AB010072">
    <property type="protein sequence ID" value="BAB09705.1"/>
    <property type="molecule type" value="Genomic_DNA"/>
</dbReference>
<dbReference type="EMBL" id="CP002688">
    <property type="protein sequence ID" value="AED94627.1"/>
    <property type="molecule type" value="Genomic_DNA"/>
</dbReference>
<dbReference type="EMBL" id="DR750813">
    <property type="status" value="NOT_ANNOTATED_CDS"/>
    <property type="molecule type" value="mRNA"/>
</dbReference>
<dbReference type="EMBL" id="DR750814">
    <property type="status" value="NOT_ANNOTATED_CDS"/>
    <property type="molecule type" value="mRNA"/>
</dbReference>
<dbReference type="RefSeq" id="NP_198919.1">
    <property type="nucleotide sequence ID" value="NM_123468.2"/>
</dbReference>
<dbReference type="SMR" id="Q9FLM6"/>
<dbReference type="BioGRID" id="19356">
    <property type="interactions" value="11"/>
</dbReference>
<dbReference type="IntAct" id="Q9FLM6">
    <property type="interactions" value="15"/>
</dbReference>
<dbReference type="STRING" id="3702.Q9FLM6"/>
<dbReference type="GlyGen" id="Q9FLM6">
    <property type="glycosylation" value="1 site"/>
</dbReference>
<dbReference type="PaxDb" id="3702-AT5G41030.1"/>
<dbReference type="EnsemblPlants" id="AT5G41030.1">
    <property type="protein sequence ID" value="AT5G41030.1"/>
    <property type="gene ID" value="AT5G41030"/>
</dbReference>
<dbReference type="GeneID" id="834105"/>
<dbReference type="Gramene" id="AT5G41030.1">
    <property type="protein sequence ID" value="AT5G41030.1"/>
    <property type="gene ID" value="AT5G41030"/>
</dbReference>
<dbReference type="KEGG" id="ath:AT5G41030"/>
<dbReference type="Araport" id="AT5G41030"/>
<dbReference type="TAIR" id="AT5G41030"/>
<dbReference type="eggNOG" id="ENOG502QQMV">
    <property type="taxonomic scope" value="Eukaryota"/>
</dbReference>
<dbReference type="HOGENOM" id="CLU_070441_0_0_1"/>
<dbReference type="InParanoid" id="Q9FLM6"/>
<dbReference type="OMA" id="VEGKRKW"/>
<dbReference type="PhylomeDB" id="Q9FLM6"/>
<dbReference type="PRO" id="PR:Q9FLM6"/>
<dbReference type="Proteomes" id="UP000006548">
    <property type="component" value="Chromosome 5"/>
</dbReference>
<dbReference type="ExpressionAtlas" id="Q9FLM6">
    <property type="expression patterns" value="baseline and differential"/>
</dbReference>
<dbReference type="GO" id="GO:0005634">
    <property type="term" value="C:nucleus"/>
    <property type="evidence" value="ECO:0007669"/>
    <property type="project" value="UniProtKB-SubCell"/>
</dbReference>
<dbReference type="GO" id="GO:0003677">
    <property type="term" value="F:DNA binding"/>
    <property type="evidence" value="ECO:0007669"/>
    <property type="project" value="UniProtKB-KW"/>
</dbReference>
<dbReference type="GO" id="GO:0003700">
    <property type="term" value="F:DNA-binding transcription factor activity"/>
    <property type="evidence" value="ECO:0000250"/>
    <property type="project" value="TAIR"/>
</dbReference>
<dbReference type="GO" id="GO:0006355">
    <property type="term" value="P:regulation of DNA-templated transcription"/>
    <property type="evidence" value="ECO:0000304"/>
    <property type="project" value="TAIR"/>
</dbReference>
<dbReference type="InterPro" id="IPR017887">
    <property type="entry name" value="TF_TCP_subgr"/>
</dbReference>
<dbReference type="InterPro" id="IPR005333">
    <property type="entry name" value="Transcription_factor_TCP"/>
</dbReference>
<dbReference type="PANTHER" id="PTHR31072">
    <property type="entry name" value="TRANSCRIPTION FACTOR TCP4-RELATED"/>
    <property type="match status" value="1"/>
</dbReference>
<dbReference type="PANTHER" id="PTHR31072:SF91">
    <property type="entry name" value="TRANSCRIPTION FACTOR TCP6"/>
    <property type="match status" value="1"/>
</dbReference>
<dbReference type="Pfam" id="PF03634">
    <property type="entry name" value="TCP"/>
    <property type="match status" value="1"/>
</dbReference>
<dbReference type="PROSITE" id="PS51369">
    <property type="entry name" value="TCP"/>
    <property type="match status" value="1"/>
</dbReference>
<comment type="subunit">
    <text evidence="4">Interacts with SPL.</text>
</comment>
<comment type="subcellular location">
    <subcellularLocation>
        <location evidence="5">Nucleus</location>
    </subcellularLocation>
</comment>
<feature type="chain" id="PRO_0000330780" description="Transcription factor TCP6">
    <location>
        <begin position="1"/>
        <end position="243"/>
    </location>
</feature>
<feature type="domain" description="TCP" evidence="2">
    <location>
        <begin position="68"/>
        <end position="122"/>
    </location>
</feature>
<feature type="region of interest" description="Disordered" evidence="3">
    <location>
        <begin position="1"/>
        <end position="55"/>
    </location>
</feature>
<feature type="coiled-coil region" evidence="1">
    <location>
        <begin position="42"/>
        <end position="66"/>
    </location>
</feature>
<feature type="compositionally biased region" description="Polar residues" evidence="3">
    <location>
        <begin position="8"/>
        <end position="21"/>
    </location>
</feature>
<feature type="compositionally biased region" description="Basic and acidic residues" evidence="3">
    <location>
        <begin position="22"/>
        <end position="35"/>
    </location>
</feature>
<organism>
    <name type="scientific">Arabidopsis thaliana</name>
    <name type="common">Mouse-ear cress</name>
    <dbReference type="NCBI Taxonomy" id="3702"/>
    <lineage>
        <taxon>Eukaryota</taxon>
        <taxon>Viridiplantae</taxon>
        <taxon>Streptophyta</taxon>
        <taxon>Embryophyta</taxon>
        <taxon>Tracheophyta</taxon>
        <taxon>Spermatophyta</taxon>
        <taxon>Magnoliopsida</taxon>
        <taxon>eudicotyledons</taxon>
        <taxon>Gunneridae</taxon>
        <taxon>Pentapetalae</taxon>
        <taxon>rosids</taxon>
        <taxon>malvids</taxon>
        <taxon>Brassicales</taxon>
        <taxon>Brassicaceae</taxon>
        <taxon>Camelineae</taxon>
        <taxon>Arabidopsis</taxon>
    </lineage>
</organism>
<proteinExistence type="evidence at protein level"/>
<name>TCP6_ARATH</name>
<evidence type="ECO:0000255" key="1"/>
<evidence type="ECO:0000255" key="2">
    <source>
        <dbReference type="PROSITE-ProRule" id="PRU00701"/>
    </source>
</evidence>
<evidence type="ECO:0000256" key="3">
    <source>
        <dbReference type="SAM" id="MobiDB-lite"/>
    </source>
</evidence>
<evidence type="ECO:0000269" key="4">
    <source>
    </source>
</evidence>
<evidence type="ECO:0000305" key="5"/>
<protein>
    <recommendedName>
        <fullName>Transcription factor TCP6</fullName>
    </recommendedName>
</protein>
<sequence length="243" mass="27618">MVMEPKKNQNLPSFLNPSRQNQDNDKKRKQTEVKGFDIVVGEKRKKKENEEEDQEIQILYEKEKKKPNKDRHLKVEGRGRRVRLPPLCAARIYQLTKELGHKSDGETLEWLLQHAEPSILSATVNGIKPTESVVSQPPLTADLMICHSVEEASRTQMEANGLWRNETGQTIGGFDLNYGIGFDFNGVPEIGFGDNQTPGLELRLSQVGVLNPQVFQQMGKEQFRVLHHHSHEDQQQSAEENGS</sequence>
<gene>
    <name type="primary">TCP6</name>
    <name type="ordered locus">At5g41030</name>
    <name type="ORF">MEE6.10</name>
</gene>
<reference key="1">
    <citation type="journal article" date="1998" name="DNA Res.">
        <title>Structural analysis of Arabidopsis thaliana chromosome 5. IV. Sequence features of the regions of 1,456,315 bp covered by nineteen physically assigned P1 and TAC clones.</title>
        <authorList>
            <person name="Sato S."/>
            <person name="Kaneko T."/>
            <person name="Kotani H."/>
            <person name="Nakamura Y."/>
            <person name="Asamizu E."/>
            <person name="Miyajima N."/>
            <person name="Tabata S."/>
        </authorList>
    </citation>
    <scope>NUCLEOTIDE SEQUENCE [LARGE SCALE GENOMIC DNA]</scope>
    <source>
        <strain>cv. Columbia</strain>
    </source>
</reference>
<reference key="2">
    <citation type="journal article" date="2017" name="Plant J.">
        <title>Araport11: a complete reannotation of the Arabidopsis thaliana reference genome.</title>
        <authorList>
            <person name="Cheng C.Y."/>
            <person name="Krishnakumar V."/>
            <person name="Chan A.P."/>
            <person name="Thibaud-Nissen F."/>
            <person name="Schobel S."/>
            <person name="Town C.D."/>
        </authorList>
    </citation>
    <scope>GENOME REANNOTATION</scope>
    <source>
        <strain>cv. Columbia</strain>
    </source>
</reference>
<reference key="3">
    <citation type="journal article" date="2002" name="Comp. Funct. Genomics">
        <title>REGIA, an EU project on functional genomics of transcription factors from Arabidopsis thaliana.</title>
        <authorList>
            <person name="Paz-Ares J."/>
            <person name="Valencia A."/>
            <person name="Costantino P."/>
            <person name="Vittorioso P."/>
            <person name="Davies B."/>
            <person name="Gilmartin P."/>
            <person name="Giraudat J."/>
            <person name="Parcy F."/>
            <person name="Reindl A."/>
            <person name="Sablowski R."/>
            <person name="Coupland G."/>
            <person name="Martin C."/>
            <person name="Angenent G.C."/>
            <person name="Baeumlein H."/>
            <person name="Mock H.-P."/>
            <person name="Carbonero P."/>
            <person name="Colombo L."/>
            <person name="Tonelli C."/>
            <person name="Engstroem P."/>
            <person name="Droege-Laser W."/>
            <person name="Gatz C."/>
            <person name="Kavanagh T."/>
            <person name="Kushnir S."/>
            <person name="Zabeau M."/>
            <person name="Laux T."/>
            <person name="Hordsworth M."/>
            <person name="Ruberti I."/>
            <person name="Ratcliff F."/>
            <person name="Smeekens S."/>
            <person name="Somssich I."/>
            <person name="Weisshaar B."/>
            <person name="Traas J."/>
        </authorList>
    </citation>
    <scope>NUCLEOTIDE SEQUENCE [LARGE SCALE MRNA]</scope>
    <source>
        <strain>cv. Columbia</strain>
    </source>
</reference>
<reference key="4">
    <citation type="journal article" date="2007" name="Plant Cell">
        <title>Arabidopsis BRANCHED1 acts as an integrator of branching signals within axillary buds.</title>
        <authorList>
            <person name="Aguilar-Martinez J.A."/>
            <person name="Poza-Carrion C."/>
            <person name="Cubas P."/>
        </authorList>
    </citation>
    <scope>GENE FAMILY</scope>
    <scope>NOMENCLATURE</scope>
</reference>
<reference key="5">
    <citation type="journal article" date="2014" name="J. Genet. Genomics">
        <title>SPOROCYTELESS is a novel embryophyte-specific transcription repressor that interacts with TPL and TCP proteins in Arabidopsis.</title>
        <authorList>
            <person name="Chen G.H."/>
            <person name="Sun J.Y."/>
            <person name="Liu M."/>
            <person name="Liu J."/>
            <person name="Yang W.C."/>
        </authorList>
    </citation>
    <scope>INTERACTION WITH SPL</scope>
</reference>
<accession>Q9FLM6</accession>
<keyword id="KW-0175">Coiled coil</keyword>
<keyword id="KW-0238">DNA-binding</keyword>
<keyword id="KW-0539">Nucleus</keyword>
<keyword id="KW-1185">Reference proteome</keyword>
<keyword id="KW-0804">Transcription</keyword>
<keyword id="KW-0805">Transcription regulation</keyword>